<reference key="1">
    <citation type="journal article" date="2002" name="Nature">
        <title>The genome sequence of Schizosaccharomyces pombe.</title>
        <authorList>
            <person name="Wood V."/>
            <person name="Gwilliam R."/>
            <person name="Rajandream M.A."/>
            <person name="Lyne M.H."/>
            <person name="Lyne R."/>
            <person name="Stewart A."/>
            <person name="Sgouros J.G."/>
            <person name="Peat N."/>
            <person name="Hayles J."/>
            <person name="Baker S.G."/>
            <person name="Basham D."/>
            <person name="Bowman S."/>
            <person name="Brooks K."/>
            <person name="Brown D."/>
            <person name="Brown S."/>
            <person name="Chillingworth T."/>
            <person name="Churcher C.M."/>
            <person name="Collins M."/>
            <person name="Connor R."/>
            <person name="Cronin A."/>
            <person name="Davis P."/>
            <person name="Feltwell T."/>
            <person name="Fraser A."/>
            <person name="Gentles S."/>
            <person name="Goble A."/>
            <person name="Hamlin N."/>
            <person name="Harris D.E."/>
            <person name="Hidalgo J."/>
            <person name="Hodgson G."/>
            <person name="Holroyd S."/>
            <person name="Hornsby T."/>
            <person name="Howarth S."/>
            <person name="Huckle E.J."/>
            <person name="Hunt S."/>
            <person name="Jagels K."/>
            <person name="James K.D."/>
            <person name="Jones L."/>
            <person name="Jones M."/>
            <person name="Leather S."/>
            <person name="McDonald S."/>
            <person name="McLean J."/>
            <person name="Mooney P."/>
            <person name="Moule S."/>
            <person name="Mungall K.L."/>
            <person name="Murphy L.D."/>
            <person name="Niblett D."/>
            <person name="Odell C."/>
            <person name="Oliver K."/>
            <person name="O'Neil S."/>
            <person name="Pearson D."/>
            <person name="Quail M.A."/>
            <person name="Rabbinowitsch E."/>
            <person name="Rutherford K.M."/>
            <person name="Rutter S."/>
            <person name="Saunders D."/>
            <person name="Seeger K."/>
            <person name="Sharp S."/>
            <person name="Skelton J."/>
            <person name="Simmonds M.N."/>
            <person name="Squares R."/>
            <person name="Squares S."/>
            <person name="Stevens K."/>
            <person name="Taylor K."/>
            <person name="Taylor R.G."/>
            <person name="Tivey A."/>
            <person name="Walsh S.V."/>
            <person name="Warren T."/>
            <person name="Whitehead S."/>
            <person name="Woodward J.R."/>
            <person name="Volckaert G."/>
            <person name="Aert R."/>
            <person name="Robben J."/>
            <person name="Grymonprez B."/>
            <person name="Weltjens I."/>
            <person name="Vanstreels E."/>
            <person name="Rieger M."/>
            <person name="Schaefer M."/>
            <person name="Mueller-Auer S."/>
            <person name="Gabel C."/>
            <person name="Fuchs M."/>
            <person name="Duesterhoeft A."/>
            <person name="Fritzc C."/>
            <person name="Holzer E."/>
            <person name="Moestl D."/>
            <person name="Hilbert H."/>
            <person name="Borzym K."/>
            <person name="Langer I."/>
            <person name="Beck A."/>
            <person name="Lehrach H."/>
            <person name="Reinhardt R."/>
            <person name="Pohl T.M."/>
            <person name="Eger P."/>
            <person name="Zimmermann W."/>
            <person name="Wedler H."/>
            <person name="Wambutt R."/>
            <person name="Purnelle B."/>
            <person name="Goffeau A."/>
            <person name="Cadieu E."/>
            <person name="Dreano S."/>
            <person name="Gloux S."/>
            <person name="Lelaure V."/>
            <person name="Mottier S."/>
            <person name="Galibert F."/>
            <person name="Aves S.J."/>
            <person name="Xiang Z."/>
            <person name="Hunt C."/>
            <person name="Moore K."/>
            <person name="Hurst S.M."/>
            <person name="Lucas M."/>
            <person name="Rochet M."/>
            <person name="Gaillardin C."/>
            <person name="Tallada V.A."/>
            <person name="Garzon A."/>
            <person name="Thode G."/>
            <person name="Daga R.R."/>
            <person name="Cruzado L."/>
            <person name="Jimenez J."/>
            <person name="Sanchez M."/>
            <person name="del Rey F."/>
            <person name="Benito J."/>
            <person name="Dominguez A."/>
            <person name="Revuelta J.L."/>
            <person name="Moreno S."/>
            <person name="Armstrong J."/>
            <person name="Forsburg S.L."/>
            <person name="Cerutti L."/>
            <person name="Lowe T."/>
            <person name="McCombie W.R."/>
            <person name="Paulsen I."/>
            <person name="Potashkin J."/>
            <person name="Shpakovski G.V."/>
            <person name="Ussery D."/>
            <person name="Barrell B.G."/>
            <person name="Nurse P."/>
        </authorList>
    </citation>
    <scope>NUCLEOTIDE SEQUENCE [LARGE SCALE GENOMIC DNA]</scope>
    <source>
        <strain>972 / ATCC 24843</strain>
    </source>
</reference>
<reference key="2">
    <citation type="journal article" date="2011" name="Science">
        <title>Comparative functional genomics of the fission yeasts.</title>
        <authorList>
            <person name="Rhind N."/>
            <person name="Chen Z."/>
            <person name="Yassour M."/>
            <person name="Thompson D.A."/>
            <person name="Haas B.J."/>
            <person name="Habib N."/>
            <person name="Wapinski I."/>
            <person name="Roy S."/>
            <person name="Lin M.F."/>
            <person name="Heiman D.I."/>
            <person name="Young S.K."/>
            <person name="Furuya K."/>
            <person name="Guo Y."/>
            <person name="Pidoux A."/>
            <person name="Chen H.M."/>
            <person name="Robbertse B."/>
            <person name="Goldberg J.M."/>
            <person name="Aoki K."/>
            <person name="Bayne E.H."/>
            <person name="Berlin A.M."/>
            <person name="Desjardins C.A."/>
            <person name="Dobbs E."/>
            <person name="Dukaj L."/>
            <person name="Fan L."/>
            <person name="FitzGerald M.G."/>
            <person name="French C."/>
            <person name="Gujja S."/>
            <person name="Hansen K."/>
            <person name="Keifenheim D."/>
            <person name="Levin J.Z."/>
            <person name="Mosher R.A."/>
            <person name="Mueller C.A."/>
            <person name="Pfiffner J."/>
            <person name="Priest M."/>
            <person name="Russ C."/>
            <person name="Smialowska A."/>
            <person name="Swoboda P."/>
            <person name="Sykes S.M."/>
            <person name="Vaughn M."/>
            <person name="Vengrova S."/>
            <person name="Yoder R."/>
            <person name="Zeng Q."/>
            <person name="Allshire R."/>
            <person name="Baulcombe D."/>
            <person name="Birren B.W."/>
            <person name="Brown W."/>
            <person name="Ekwall K."/>
            <person name="Kellis M."/>
            <person name="Leatherwood J."/>
            <person name="Levin H."/>
            <person name="Margalit H."/>
            <person name="Martienssen R."/>
            <person name="Nieduszynski C.A."/>
            <person name="Spatafora J.W."/>
            <person name="Friedman N."/>
            <person name="Dalgaard J.Z."/>
            <person name="Baumann P."/>
            <person name="Niki H."/>
            <person name="Regev A."/>
            <person name="Nusbaum C."/>
        </authorList>
    </citation>
    <scope>REVISION OF GENE MODEL</scope>
</reference>
<evidence type="ECO:0000256" key="1">
    <source>
        <dbReference type="SAM" id="MobiDB-lite"/>
    </source>
</evidence>
<sequence length="103" mass="11919">MVVKKSKPKNQIRVEDLDLPKLNTSKNPQTKIQKKGKKKGKIFAETKDDLQNILNQVTYELDDKIKSKLQVAHEREAVFSKQSDRKISNNKADKKTGRKNEKK</sequence>
<proteinExistence type="predicted"/>
<gene>
    <name type="ORF">SPAC1751.04</name>
</gene>
<keyword id="KW-1185">Reference proteome</keyword>
<protein>
    <recommendedName>
        <fullName>Uncharacterized protein C1751.04</fullName>
    </recommendedName>
</protein>
<organism>
    <name type="scientific">Schizosaccharomyces pombe (strain 972 / ATCC 24843)</name>
    <name type="common">Fission yeast</name>
    <dbReference type="NCBI Taxonomy" id="284812"/>
    <lineage>
        <taxon>Eukaryota</taxon>
        <taxon>Fungi</taxon>
        <taxon>Dikarya</taxon>
        <taxon>Ascomycota</taxon>
        <taxon>Taphrinomycotina</taxon>
        <taxon>Schizosaccharomycetes</taxon>
        <taxon>Schizosaccharomycetales</taxon>
        <taxon>Schizosaccharomycetaceae</taxon>
        <taxon>Schizosaccharomyces</taxon>
    </lineage>
</organism>
<feature type="chain" id="PRO_0000116787" description="Uncharacterized protein C1751.04">
    <location>
        <begin position="1"/>
        <end position="103"/>
    </location>
</feature>
<feature type="region of interest" description="Disordered" evidence="1">
    <location>
        <begin position="1"/>
        <end position="38"/>
    </location>
</feature>
<feature type="region of interest" description="Disordered" evidence="1">
    <location>
        <begin position="77"/>
        <end position="103"/>
    </location>
</feature>
<feature type="compositionally biased region" description="Basic residues" evidence="1">
    <location>
        <begin position="1"/>
        <end position="10"/>
    </location>
</feature>
<name>YIB4_SCHPO</name>
<accession>Q8TFI0</accession>
<dbReference type="EMBL" id="CU329670">
    <property type="protein sequence ID" value="CAD29730.2"/>
    <property type="molecule type" value="Genomic_DNA"/>
</dbReference>
<dbReference type="SMR" id="Q8TFI0"/>
<dbReference type="BioGRID" id="280616">
    <property type="interactions" value="1"/>
</dbReference>
<dbReference type="PaxDb" id="4896-SPAC1751.04.1"/>
<dbReference type="EnsemblFungi" id="SPAC1751.04.1">
    <property type="protein sequence ID" value="SPAC1751.04.1:pep"/>
    <property type="gene ID" value="SPAC1751.04"/>
</dbReference>
<dbReference type="KEGG" id="spo:3361540"/>
<dbReference type="PomBase" id="SPAC1751.04"/>
<dbReference type="VEuPathDB" id="FungiDB:SPAC1751.04"/>
<dbReference type="HOGENOM" id="CLU_169841_0_0_1"/>
<dbReference type="InParanoid" id="Q8TFI0"/>
<dbReference type="PRO" id="PR:Q8TFI0"/>
<dbReference type="Proteomes" id="UP000002485">
    <property type="component" value="Chromosome I"/>
</dbReference>
<dbReference type="GO" id="GO:0005730">
    <property type="term" value="C:nucleolus"/>
    <property type="evidence" value="ECO:0000266"/>
    <property type="project" value="PomBase"/>
</dbReference>
<dbReference type="GO" id="GO:0030684">
    <property type="term" value="C:preribosome"/>
    <property type="evidence" value="ECO:0000266"/>
    <property type="project" value="PomBase"/>
</dbReference>
<dbReference type="GO" id="GO:0042273">
    <property type="term" value="P:ribosomal large subunit biogenesis"/>
    <property type="evidence" value="ECO:0000266"/>
    <property type="project" value="PomBase"/>
</dbReference>